<comment type="function">
    <text evidence="3">Hydrolyzes beta-cyclodextrin to maltose and glucose, soluble starch to maltose and glucose, and pullulan to panose with trace amounts of maltose and glucose. It is also able to hydrolyze acarbose. Can also exhibit a transglycosylation activity transferring glucose or maltose to another moiety of sugars by forming alpha-(1,6)- and alpha-(1,3)-glycosidic linkages upon the hydrolysis of substrate at concentrations of 5% or higher.</text>
</comment>
<comment type="cofactor">
    <cofactor evidence="2">
        <name>Ca(2+)</name>
        <dbReference type="ChEBI" id="CHEBI:29108"/>
    </cofactor>
    <text evidence="2">Binds 1 Ca(2+) ion per subunit.</text>
</comment>
<comment type="biophysicochemical properties">
    <phDependence>
        <text evidence="3">Optimum pH is 7.0. Stable at pH 6.0 and about 80% of the enzyme activity remained between pH 7.0 and pH 8.0.</text>
    </phDependence>
    <temperatureDependence>
        <text evidence="3">Optimum temperature is 40-45 degrees Celsius.</text>
    </temperatureDependence>
</comment>
<comment type="subunit">
    <text evidence="3">Monomer or homodimer; in equilibrium.</text>
</comment>
<comment type="subcellular location">
    <subcellularLocation>
        <location evidence="3">Cytoplasm</location>
    </subcellularLocation>
</comment>
<comment type="similarity">
    <text evidence="4">Belongs to the glycosyl hydrolase 13 family. BbmA subfamily.</text>
</comment>
<comment type="sequence caution" evidence="4">
    <conflict type="erroneous initiation">
        <sequence resource="EMBL-CDS" id="AAF23874"/>
    </conflict>
</comment>
<feature type="chain" id="PRO_0000366978" description="Intracellular maltogenic amylase">
    <location>
        <begin position="1"/>
        <end position="588"/>
    </location>
</feature>
<feature type="active site" description="Nucleophile" evidence="2">
    <location>
        <position position="327"/>
    </location>
</feature>
<feature type="active site" description="Proton donor" evidence="2">
    <location>
        <position position="356"/>
    </location>
</feature>
<feature type="binding site" evidence="2">
    <location>
        <position position="149"/>
    </location>
    <ligand>
        <name>Ca(2+)</name>
        <dbReference type="ChEBI" id="CHEBI:29108"/>
    </ligand>
</feature>
<feature type="binding site" evidence="2">
    <location>
        <position position="155"/>
    </location>
    <ligand>
        <name>Ca(2+)</name>
        <dbReference type="ChEBI" id="CHEBI:29108"/>
    </ligand>
</feature>
<feature type="binding site" evidence="2">
    <location>
        <position position="174"/>
    </location>
    <ligand>
        <name>Ca(2+)</name>
        <dbReference type="ChEBI" id="CHEBI:29108"/>
    </ligand>
</feature>
<feature type="binding site" evidence="2">
    <location>
        <position position="176"/>
    </location>
    <ligand>
        <name>Ca(2+)</name>
        <dbReference type="ChEBI" id="CHEBI:29108"/>
    </ligand>
</feature>
<feature type="binding site" evidence="2">
    <location>
        <position position="249"/>
    </location>
    <ligand>
        <name>substrate</name>
    </ligand>
</feature>
<feature type="binding site" evidence="2">
    <location>
        <position position="325"/>
    </location>
    <ligand>
        <name>substrate</name>
    </ligand>
</feature>
<feature type="binding site" evidence="2">
    <location>
        <begin position="422"/>
        <end position="423"/>
    </location>
    <ligand>
        <name>substrate</name>
    </ligand>
</feature>
<feature type="binding site" evidence="2">
    <location>
        <position position="467"/>
    </location>
    <ligand>
        <name>substrate</name>
    </ligand>
</feature>
<feature type="binding site" evidence="2">
    <location>
        <position position="471"/>
    </location>
    <ligand>
        <name>substrate</name>
    </ligand>
</feature>
<feature type="site" description="Transition state stabilizer" evidence="1">
    <location>
        <position position="423"/>
    </location>
</feature>
<name>BBMA_BACIU</name>
<dbReference type="EC" id="3.2.1.-"/>
<dbReference type="EMBL" id="AF115340">
    <property type="protein sequence ID" value="AAF23874.1"/>
    <property type="status" value="ALT_INIT"/>
    <property type="molecule type" value="Genomic_DNA"/>
</dbReference>
<dbReference type="SMR" id="Q9R9H8"/>
<dbReference type="STRING" id="483913.AN935_17415"/>
<dbReference type="CAZy" id="CBM34">
    <property type="family name" value="Carbohydrate-Binding Module Family 34"/>
</dbReference>
<dbReference type="CAZy" id="GH13">
    <property type="family name" value="Glycoside Hydrolase Family 13"/>
</dbReference>
<dbReference type="GO" id="GO:0005737">
    <property type="term" value="C:cytoplasm"/>
    <property type="evidence" value="ECO:0007669"/>
    <property type="project" value="UniProtKB-SubCell"/>
</dbReference>
<dbReference type="GO" id="GO:0004553">
    <property type="term" value="F:hydrolase activity, hydrolyzing O-glycosyl compounds"/>
    <property type="evidence" value="ECO:0007669"/>
    <property type="project" value="InterPro"/>
</dbReference>
<dbReference type="GO" id="GO:0046872">
    <property type="term" value="F:metal ion binding"/>
    <property type="evidence" value="ECO:0007669"/>
    <property type="project" value="UniProtKB-KW"/>
</dbReference>
<dbReference type="GO" id="GO:0005975">
    <property type="term" value="P:carbohydrate metabolic process"/>
    <property type="evidence" value="ECO:0007669"/>
    <property type="project" value="InterPro"/>
</dbReference>
<dbReference type="CDD" id="cd11338">
    <property type="entry name" value="AmyAc_CMD"/>
    <property type="match status" value="1"/>
</dbReference>
<dbReference type="CDD" id="cd02857">
    <property type="entry name" value="E_set_CDase_PDE_N"/>
    <property type="match status" value="1"/>
</dbReference>
<dbReference type="Gene3D" id="3.20.20.80">
    <property type="entry name" value="Glycosidases"/>
    <property type="match status" value="1"/>
</dbReference>
<dbReference type="Gene3D" id="2.60.40.10">
    <property type="entry name" value="Immunoglobulins"/>
    <property type="match status" value="1"/>
</dbReference>
<dbReference type="Gene3D" id="3.90.400.10">
    <property type="entry name" value="Oligo-1,6-glucosidase, Domain 2"/>
    <property type="match status" value="1"/>
</dbReference>
<dbReference type="InterPro" id="IPR006047">
    <property type="entry name" value="Glyco_hydro_13_cat_dom"/>
</dbReference>
<dbReference type="InterPro" id="IPR004185">
    <property type="entry name" value="Glyco_hydro_13_lg-like_dom"/>
</dbReference>
<dbReference type="InterPro" id="IPR017853">
    <property type="entry name" value="Glycoside_hydrolase_SF"/>
</dbReference>
<dbReference type="InterPro" id="IPR013783">
    <property type="entry name" value="Ig-like_fold"/>
</dbReference>
<dbReference type="InterPro" id="IPR045857">
    <property type="entry name" value="O16G_dom_2"/>
</dbReference>
<dbReference type="PANTHER" id="PTHR10357">
    <property type="entry name" value="ALPHA-AMYLASE FAMILY MEMBER"/>
    <property type="match status" value="1"/>
</dbReference>
<dbReference type="PANTHER" id="PTHR10357:SF210">
    <property type="entry name" value="MALTODEXTRIN GLUCOSIDASE"/>
    <property type="match status" value="1"/>
</dbReference>
<dbReference type="Pfam" id="PF00128">
    <property type="entry name" value="Alpha-amylase"/>
    <property type="match status" value="1"/>
</dbReference>
<dbReference type="Pfam" id="PF02903">
    <property type="entry name" value="Alpha-amylase_N"/>
    <property type="match status" value="1"/>
</dbReference>
<dbReference type="SMART" id="SM00642">
    <property type="entry name" value="Aamy"/>
    <property type="match status" value="1"/>
</dbReference>
<dbReference type="SUPFAM" id="SSF51445">
    <property type="entry name" value="(Trans)glycosidases"/>
    <property type="match status" value="1"/>
</dbReference>
<dbReference type="SUPFAM" id="SSF51011">
    <property type="entry name" value="Glycosyl hydrolase domain"/>
    <property type="match status" value="1"/>
</dbReference>
<protein>
    <recommendedName>
        <fullName>Intracellular maltogenic amylase</fullName>
        <ecNumber>3.2.1.-</ecNumber>
    </recommendedName>
</protein>
<accession>Q9R9H8</accession>
<gene>
    <name type="primary">bbmA</name>
</gene>
<organism>
    <name type="scientific">Bacillus subtilis</name>
    <dbReference type="NCBI Taxonomy" id="1423"/>
    <lineage>
        <taxon>Bacteria</taxon>
        <taxon>Bacillati</taxon>
        <taxon>Bacillota</taxon>
        <taxon>Bacilli</taxon>
        <taxon>Bacillales</taxon>
        <taxon>Bacillaceae</taxon>
        <taxon>Bacillus</taxon>
    </lineage>
</organism>
<sequence>MEYAAIHHQPFSTDAYSYDGRTVHIKIRTKKGDADHIRFIWGDPYEYNDGKWSANEQPMRKIAATEMHDYWFAEVVPPFRRLQYAFVVTDDHEDIFFGSSGVCPYNEKTLETIHYYFKFPFVHEADTFQAPEWVKSTVWYQIFPERFANGREDLSPKNALPWGSKDPGVNDFFGGDLQGIVDKLDYLEDLGVNGIYLTPIFSAPSNHKYDTLDYFSIDPHFGDPEIFRTLVSQLHQRGMRIMLDAVFNHIGSASPQWQDVVKNGDQSRYKDWFHIHSFPVTDDNYDRFAFTADMPKLNTANPEVQKYLLDIALYWIREFDIDGWRLDVANEVDHVFWKTFRQAVSTEKPDVYILGEIWHSAEPWLRGDEFHAAMNYPFTEPMIEYFADQTISASRMAHRVNAHLMNGMKQANEVMFNLLDSHDTKRLLTRCRNDEKKARALLAFMFAQTGSPCIYYGTEIGLDGENDPLCRKCMVWEKEKQNQDMLQFMKRLIALRKQENTLLTEGHLEWNLLDDKNDFISFSRTLDEKILIYFFNQGNVVQHISLRELNIDRNNKICDAWTEQPLHYHDVIAVQPGEFLILSAAAPV</sequence>
<evidence type="ECO:0000250" key="1"/>
<evidence type="ECO:0000250" key="2">
    <source>
        <dbReference type="UniProtKB" id="P38940"/>
    </source>
</evidence>
<evidence type="ECO:0000269" key="3">
    <source>
    </source>
</evidence>
<evidence type="ECO:0000305" key="4"/>
<keyword id="KW-0106">Calcium</keyword>
<keyword id="KW-0119">Carbohydrate metabolism</keyword>
<keyword id="KW-0963">Cytoplasm</keyword>
<keyword id="KW-0326">Glycosidase</keyword>
<keyword id="KW-0378">Hydrolase</keyword>
<keyword id="KW-0479">Metal-binding</keyword>
<proteinExistence type="evidence at protein level"/>
<reference key="1">
    <citation type="journal article" date="2000" name="Biochim. Biophys. Acta">
        <title>Molecular characterization of a dimeric intracellular maltogenic amylase of Bacillus subtilis SUH4-2.</title>
        <authorList>
            <person name="Cho H.-Y."/>
            <person name="Kim Y.-W."/>
            <person name="Kim T.-J."/>
            <person name="Lee H.-S."/>
            <person name="Kim D.-Y."/>
            <person name="Kim J.-W."/>
            <person name="Lee Y.-W."/>
            <person name="Leed S.-B."/>
            <person name="Park K.-H."/>
        </authorList>
    </citation>
    <scope>NUCLEOTIDE SEQUENCE [GENOMIC DNA]</scope>
    <scope>FUNCTION</scope>
    <scope>BIOPHYSICOCHEMICAL PROPERTIES</scope>
    <scope>SUBCELLULAR LOCATION</scope>
    <scope>SUBUNIT</scope>
    <source>
        <strain>SUH4-2</strain>
    </source>
</reference>